<protein>
    <recommendedName>
        <fullName evidence="1">Protein SprT-like</fullName>
    </recommendedName>
</protein>
<proteinExistence type="inferred from homology"/>
<name>SPRTL_GEOKA</name>
<organism>
    <name type="scientific">Geobacillus kaustophilus (strain HTA426)</name>
    <dbReference type="NCBI Taxonomy" id="235909"/>
    <lineage>
        <taxon>Bacteria</taxon>
        <taxon>Bacillati</taxon>
        <taxon>Bacillota</taxon>
        <taxon>Bacilli</taxon>
        <taxon>Bacillales</taxon>
        <taxon>Anoxybacillaceae</taxon>
        <taxon>Geobacillus</taxon>
        <taxon>Geobacillus thermoleovorans group</taxon>
    </lineage>
</organism>
<sequence length="149" mass="17853">MDQKQLQALVEQISIRVFGKPFRHTAFFNPRLRTTGGRYMLQTHNIELNKKHYEQFGEEELIAIIKHELCHYHLHLEGKGYRHRDRDFRELLQKVGAPRYCRPLARNTKAPKTIYTYICTSCGLTYRRKRRINIDRYVCGRCRSKLKLS</sequence>
<feature type="chain" id="PRO_1000046512" description="Protein SprT-like">
    <location>
        <begin position="1"/>
        <end position="149"/>
    </location>
</feature>
<feature type="domain" description="SprT-like" evidence="1">
    <location>
        <begin position="6"/>
        <end position="147"/>
    </location>
</feature>
<feature type="active site" evidence="1">
    <location>
        <position position="68"/>
    </location>
</feature>
<feature type="binding site" evidence="1">
    <location>
        <position position="67"/>
    </location>
    <ligand>
        <name>Zn(2+)</name>
        <dbReference type="ChEBI" id="CHEBI:29105"/>
    </ligand>
</feature>
<feature type="binding site" evidence="1">
    <location>
        <position position="71"/>
    </location>
    <ligand>
        <name>Zn(2+)</name>
        <dbReference type="ChEBI" id="CHEBI:29105"/>
    </ligand>
</feature>
<comment type="cofactor">
    <cofactor evidence="1">
        <name>Zn(2+)</name>
        <dbReference type="ChEBI" id="CHEBI:29105"/>
    </cofactor>
    <text evidence="1">Binds 1 zinc ion.</text>
</comment>
<comment type="subcellular location">
    <subcellularLocation>
        <location evidence="1">Cytoplasm</location>
    </subcellularLocation>
</comment>
<comment type="similarity">
    <text evidence="1">Belongs to the SprT family.</text>
</comment>
<evidence type="ECO:0000255" key="1">
    <source>
        <dbReference type="HAMAP-Rule" id="MF_00745"/>
    </source>
</evidence>
<gene>
    <name type="ordered locus">GK0235</name>
</gene>
<keyword id="KW-0963">Cytoplasm</keyword>
<keyword id="KW-0479">Metal-binding</keyword>
<keyword id="KW-1185">Reference proteome</keyword>
<keyword id="KW-0862">Zinc</keyword>
<reference key="1">
    <citation type="journal article" date="2004" name="Nucleic Acids Res.">
        <title>Thermoadaptation trait revealed by the genome sequence of thermophilic Geobacillus kaustophilus.</title>
        <authorList>
            <person name="Takami H."/>
            <person name="Takaki Y."/>
            <person name="Chee G.-J."/>
            <person name="Nishi S."/>
            <person name="Shimamura S."/>
            <person name="Suzuki H."/>
            <person name="Matsui S."/>
            <person name="Uchiyama I."/>
        </authorList>
    </citation>
    <scope>NUCLEOTIDE SEQUENCE [LARGE SCALE GENOMIC DNA]</scope>
    <source>
        <strain>HTA426</strain>
    </source>
</reference>
<dbReference type="EMBL" id="BA000043">
    <property type="protein sequence ID" value="BAD74520.1"/>
    <property type="molecule type" value="Genomic_DNA"/>
</dbReference>
<dbReference type="RefSeq" id="WP_011229744.1">
    <property type="nucleotide sequence ID" value="NC_006510.1"/>
</dbReference>
<dbReference type="STRING" id="235909.GK0235"/>
<dbReference type="KEGG" id="gka:GK0235"/>
<dbReference type="eggNOG" id="COG3091">
    <property type="taxonomic scope" value="Bacteria"/>
</dbReference>
<dbReference type="HOGENOM" id="CLU_123820_0_0_9"/>
<dbReference type="Proteomes" id="UP000001172">
    <property type="component" value="Chromosome"/>
</dbReference>
<dbReference type="GO" id="GO:0005737">
    <property type="term" value="C:cytoplasm"/>
    <property type="evidence" value="ECO:0007669"/>
    <property type="project" value="UniProtKB-SubCell"/>
</dbReference>
<dbReference type="GO" id="GO:0008270">
    <property type="term" value="F:zinc ion binding"/>
    <property type="evidence" value="ECO:0007669"/>
    <property type="project" value="UniProtKB-UniRule"/>
</dbReference>
<dbReference type="GO" id="GO:0006950">
    <property type="term" value="P:response to stress"/>
    <property type="evidence" value="ECO:0007669"/>
    <property type="project" value="UniProtKB-ARBA"/>
</dbReference>
<dbReference type="HAMAP" id="MF_00745">
    <property type="entry name" value="SprT_like"/>
    <property type="match status" value="1"/>
</dbReference>
<dbReference type="InterPro" id="IPR006640">
    <property type="entry name" value="SprT-like_domain"/>
</dbReference>
<dbReference type="InterPro" id="IPR035240">
    <property type="entry name" value="SprT_Zn_ribbon"/>
</dbReference>
<dbReference type="InterPro" id="IPR023524">
    <property type="entry name" value="Uncharacterised_SprT-like"/>
</dbReference>
<dbReference type="NCBIfam" id="NF003339">
    <property type="entry name" value="PRK04351.1"/>
    <property type="match status" value="1"/>
</dbReference>
<dbReference type="Pfam" id="PF10263">
    <property type="entry name" value="SprT-like"/>
    <property type="match status" value="1"/>
</dbReference>
<dbReference type="Pfam" id="PF17283">
    <property type="entry name" value="Zn_ribbon_SprT"/>
    <property type="match status" value="1"/>
</dbReference>
<dbReference type="SMART" id="SM00731">
    <property type="entry name" value="SprT"/>
    <property type="match status" value="1"/>
</dbReference>
<accession>Q5L3G0</accession>